<accession>B5ETZ4</accession>
<name>Y3413_ALIFM</name>
<comment type="similarity">
    <text evidence="1">Belongs to the UPF0502 family.</text>
</comment>
<evidence type="ECO:0000255" key="1">
    <source>
        <dbReference type="HAMAP-Rule" id="MF_01584"/>
    </source>
</evidence>
<organism>
    <name type="scientific">Aliivibrio fischeri (strain MJ11)</name>
    <name type="common">Vibrio fischeri</name>
    <dbReference type="NCBI Taxonomy" id="388396"/>
    <lineage>
        <taxon>Bacteria</taxon>
        <taxon>Pseudomonadati</taxon>
        <taxon>Pseudomonadota</taxon>
        <taxon>Gammaproteobacteria</taxon>
        <taxon>Vibrionales</taxon>
        <taxon>Vibrionaceae</taxon>
        <taxon>Aliivibrio</taxon>
    </lineage>
</organism>
<protein>
    <recommendedName>
        <fullName evidence="1">UPF0502 protein VFMJ11_A0613</fullName>
    </recommendedName>
</protein>
<sequence length="217" mass="24335">MRIFSETEIRIIGCLIEKEITTPEQYPLTLNALTTACNQKSNRDPVTSLTDSDVLDSVNALIQERIITDETRGNSRVAKYQHRFCNTEFGSLKLSKQELAVLCVLFLRGPQTPGELRTRTQRLCEFDNVAQVENVLNGLSADEHSPKVIKLAKEPGKREARFAHLFCGEVSQATATVQQAPSESHDNERIVALESDVADLKLEVEELKKLINNLLDK</sequence>
<proteinExistence type="inferred from homology"/>
<dbReference type="EMBL" id="CP001133">
    <property type="protein sequence ID" value="ACH64091.1"/>
    <property type="molecule type" value="Genomic_DNA"/>
</dbReference>
<dbReference type="RefSeq" id="WP_012535225.1">
    <property type="nucleotide sequence ID" value="NC_011186.1"/>
</dbReference>
<dbReference type="SMR" id="B5ETZ4"/>
<dbReference type="KEGG" id="vfm:VFMJ11_A0613"/>
<dbReference type="HOGENOM" id="CLU_057831_2_0_6"/>
<dbReference type="Proteomes" id="UP000001857">
    <property type="component" value="Chromosome II"/>
</dbReference>
<dbReference type="Gene3D" id="1.10.10.10">
    <property type="entry name" value="Winged helix-like DNA-binding domain superfamily/Winged helix DNA-binding domain"/>
    <property type="match status" value="2"/>
</dbReference>
<dbReference type="HAMAP" id="MF_01584">
    <property type="entry name" value="UPF0502"/>
    <property type="match status" value="1"/>
</dbReference>
<dbReference type="InterPro" id="IPR007432">
    <property type="entry name" value="DUF480"/>
</dbReference>
<dbReference type="InterPro" id="IPR036388">
    <property type="entry name" value="WH-like_DNA-bd_sf"/>
</dbReference>
<dbReference type="InterPro" id="IPR036390">
    <property type="entry name" value="WH_DNA-bd_sf"/>
</dbReference>
<dbReference type="PANTHER" id="PTHR38768">
    <property type="entry name" value="UPF0502 PROTEIN YCEH"/>
    <property type="match status" value="1"/>
</dbReference>
<dbReference type="PANTHER" id="PTHR38768:SF1">
    <property type="entry name" value="UPF0502 PROTEIN YCEH"/>
    <property type="match status" value="1"/>
</dbReference>
<dbReference type="Pfam" id="PF04337">
    <property type="entry name" value="DUF480"/>
    <property type="match status" value="1"/>
</dbReference>
<dbReference type="SUPFAM" id="SSF46785">
    <property type="entry name" value="Winged helix' DNA-binding domain"/>
    <property type="match status" value="2"/>
</dbReference>
<reference key="1">
    <citation type="submission" date="2008-08" db="EMBL/GenBank/DDBJ databases">
        <title>Complete sequence of Vibrio fischeri strain MJ11.</title>
        <authorList>
            <person name="Mandel M.J."/>
            <person name="Stabb E.V."/>
            <person name="Ruby E.G."/>
            <person name="Ferriera S."/>
            <person name="Johnson J."/>
            <person name="Kravitz S."/>
            <person name="Beeson K."/>
            <person name="Sutton G."/>
            <person name="Rogers Y.-H."/>
            <person name="Friedman R."/>
            <person name="Frazier M."/>
            <person name="Venter J.C."/>
        </authorList>
    </citation>
    <scope>NUCLEOTIDE SEQUENCE [LARGE SCALE GENOMIC DNA]</scope>
    <source>
        <strain>MJ11</strain>
    </source>
</reference>
<feature type="chain" id="PRO_1000201260" description="UPF0502 protein VFMJ11_A0613">
    <location>
        <begin position="1"/>
        <end position="217"/>
    </location>
</feature>
<gene>
    <name type="ordered locus">VFMJ11_A0613</name>
</gene>